<proteinExistence type="evidence at protein level"/>
<keyword id="KW-0119">Carbohydrate metabolism</keyword>
<keyword id="KW-0326">Glycosidase</keyword>
<keyword id="KW-0378">Hydrolase</keyword>
<keyword id="KW-0511">Multifunctional enzyme</keyword>
<keyword id="KW-0624">Polysaccharide degradation</keyword>
<keyword id="KW-1185">Reference proteome</keyword>
<keyword id="KW-0732">Signal</keyword>
<keyword id="KW-0858">Xylan degradation</keyword>
<accession>D5EY13</accession>
<accession>C0LJN0</accession>
<organism>
    <name type="scientific">Xylanibacter ruminicola (strain ATCC 19189 / DSM 19721 / CIP 105475 / JCM 8958 / 23)</name>
    <name type="common">Prevotella ruminicola</name>
    <dbReference type="NCBI Taxonomy" id="264731"/>
    <lineage>
        <taxon>Bacteria</taxon>
        <taxon>Pseudomonadati</taxon>
        <taxon>Bacteroidota</taxon>
        <taxon>Bacteroidia</taxon>
        <taxon>Bacteroidales</taxon>
        <taxon>Prevotellaceae</taxon>
        <taxon>Xylanibacter</taxon>
    </lineage>
</organism>
<feature type="signal peptide" evidence="2">
    <location>
        <begin position="1"/>
        <end position="19"/>
    </location>
</feature>
<feature type="chain" id="PRO_0000422405" description="Endo-1,4-beta-xylanase/feruloyl esterase" evidence="2">
    <location>
        <begin position="20"/>
        <end position="726"/>
    </location>
</feature>
<feature type="domain" description="GH10" evidence="3">
    <location>
        <begin position="27"/>
        <end position="369"/>
    </location>
</feature>
<feature type="region of interest" description="Feruloyl esterase">
    <location>
        <begin position="370"/>
        <end position="726"/>
    </location>
</feature>
<feature type="active site" description="Proton donor; for xylanase activity" evidence="1">
    <location>
        <position position="161"/>
    </location>
</feature>
<feature type="active site" description="Nucleophile; for xylanase activity" evidence="10">
    <location>
        <position position="280"/>
    </location>
</feature>
<feature type="active site" description="Nucleophile; for esterase activity" evidence="10">
    <location>
        <position position="629"/>
    </location>
</feature>
<feature type="mutagenesis site" description="Marked decrease in xylanase activity. Shows approximately 3-fold increase in feruloyl esterase activity." evidence="4">
    <original>E</original>
    <variation>S</variation>
    <location>
        <position position="280"/>
    </location>
</feature>
<feature type="mutagenesis site" description="Marked decrease in feruloyl esterase activity." evidence="4">
    <original>S</original>
    <variation>A</variation>
    <location>
        <position position="629"/>
    </location>
</feature>
<protein>
    <recommendedName>
        <fullName evidence="7 8">Endo-1,4-beta-xylanase/feruloyl esterase</fullName>
    </recommendedName>
    <domain>
        <recommendedName>
            <fullName>Endo-1,4-beta-xylanase</fullName>
            <ecNumber evidence="4">3.2.1.8</ecNumber>
        </recommendedName>
    </domain>
    <domain>
        <recommendedName>
            <fullName>Feruloyl esterase</fullName>
            <ecNumber evidence="4">3.1.1.73</ecNumber>
        </recommendedName>
        <alternativeName>
            <fullName>Ferulic acid esterase</fullName>
        </alternativeName>
    </domain>
</protein>
<evidence type="ECO:0000250" key="1"/>
<evidence type="ECO:0000255" key="2"/>
<evidence type="ECO:0000255" key="3">
    <source>
        <dbReference type="PROSITE-ProRule" id="PRU01096"/>
    </source>
</evidence>
<evidence type="ECO:0000269" key="4">
    <source>
    </source>
</evidence>
<evidence type="ECO:0000269" key="5">
    <source>
    </source>
</evidence>
<evidence type="ECO:0000269" key="6">
    <source>
    </source>
</evidence>
<evidence type="ECO:0000303" key="7">
    <source>
    </source>
</evidence>
<evidence type="ECO:0000303" key="8">
    <source>
    </source>
</evidence>
<evidence type="ECO:0000305" key="9"/>
<evidence type="ECO:0000305" key="10">
    <source>
    </source>
</evidence>
<evidence type="ECO:0000312" key="11">
    <source>
        <dbReference type="EMBL" id="ACN78954.1"/>
    </source>
</evidence>
<evidence type="ECO:0000312" key="12">
    <source>
        <dbReference type="EMBL" id="ADE83639.1"/>
    </source>
</evidence>
<reference evidence="9 11" key="1">
    <citation type="journal article" date="2009" name="J. Bacteriol.">
        <title>Biochemical analysis of a beta-D-xylosidase and a bifunctional xylanase-ferulic acid esterase from a xylanolytic gene cluster in Prevotella ruminicola 23.</title>
        <authorList>
            <person name="Dodd D."/>
            <person name="Kocherginskaya S.A."/>
            <person name="Spies M.A."/>
            <person name="Beery K.E."/>
            <person name="Abbas C.A."/>
            <person name="Mackie R.I."/>
            <person name="Cann I.K."/>
        </authorList>
    </citation>
    <scope>NUCLEOTIDE SEQUENCE [GENOMIC DNA]</scope>
    <scope>FUNCTION</scope>
    <scope>CATALYTIC ACTIVITY</scope>
    <scope>PATHWAY</scope>
    <scope>BIOPHYSICOCHEMICAL PROPERTIES</scope>
    <scope>ACTIVE SITE</scope>
    <scope>SUBSTRATE SPECIFICITY</scope>
    <scope>DOMAIN</scope>
    <scope>GENE NAME</scope>
    <scope>SUBUNIT</scope>
    <scope>MUTAGENESIS OF GLU-280 AND SER-629</scope>
    <source>
        <strain evidence="4">ATCC 19189 / DSM 19721 / CIP 105475 / JCM 8958 / 23</strain>
    </source>
</reference>
<reference evidence="9 12" key="2">
    <citation type="journal article" date="2010" name="Microb. Ecol.">
        <title>Comparative genome analysis of Prevotella ruminicola and Prevotella bryantii: insights into their environmental niche.</title>
        <authorList>
            <person name="Purushe J."/>
            <person name="Fouts D.E."/>
            <person name="Morrison M."/>
            <person name="White B.A."/>
            <person name="Mackie R.I."/>
            <person name="Coutinho P.M."/>
            <person name="Henrissat B."/>
            <person name="Nelson K.E."/>
        </authorList>
    </citation>
    <scope>NUCLEOTIDE SEQUENCE [LARGE SCALE GENOMIC DNA]</scope>
    <source>
        <strain evidence="5">ATCC 19189 / DSM 19721 / CIP 105475 / JCM 8958 / 23</strain>
    </source>
</reference>
<reference evidence="9 11" key="3">
    <citation type="journal article" date="2011" name="Appl. Environ. Microbiol.">
        <title>Biochemical characterization and relative expression levels of multiple carbohydrate esterases of the xylanolytic rumen bacterium Prevotella ruminicola 23 grown on an ester-enriched substrate.</title>
        <authorList>
            <person name="Kabel M.A."/>
            <person name="Yeoman C.J."/>
            <person name="Han Y."/>
            <person name="Dodd D."/>
            <person name="Abbas C.A."/>
            <person name="de Bont J.A."/>
            <person name="Morrison M."/>
            <person name="Cann I.K."/>
            <person name="Mackie R.I."/>
        </authorList>
    </citation>
    <scope>FUNCTION</scope>
    <scope>CATALYTIC ACTIVITY</scope>
    <scope>PATHWAY</scope>
    <scope>INDUCTION</scope>
    <scope>IDENTIFICATION BY MASS SPECTROMETRY</scope>
    <scope>SUBSTRATE SPECIFICITY</scope>
    <source>
        <strain evidence="6">ATCC 19189 / DSM 19721 / CIP 105475 / JCM 8958 / 23</strain>
    </source>
</reference>
<name>XYFA_XYLR2</name>
<gene>
    <name evidence="11" type="primary">xyn10D-fae1A</name>
    <name type="ordered locus">PRU_2728</name>
    <name type="ORF">ORF02827</name>
</gene>
<dbReference type="EC" id="3.2.1.8" evidence="4"/>
<dbReference type="EC" id="3.1.1.73" evidence="4"/>
<dbReference type="EMBL" id="FJ713437">
    <property type="protein sequence ID" value="ACN78954.1"/>
    <property type="molecule type" value="Genomic_DNA"/>
</dbReference>
<dbReference type="EMBL" id="CP002006">
    <property type="protein sequence ID" value="ADE83639.1"/>
    <property type="molecule type" value="Genomic_DNA"/>
</dbReference>
<dbReference type="RefSeq" id="WP_013065621.1">
    <property type="nucleotide sequence ID" value="NC_014033.1"/>
</dbReference>
<dbReference type="SMR" id="D5EY13"/>
<dbReference type="STRING" id="264731.PRU_2728"/>
<dbReference type="CAZy" id="GH10">
    <property type="family name" value="Glycoside Hydrolase Family 10"/>
</dbReference>
<dbReference type="ESTHER" id="preru-c0ljn0">
    <property type="family name" value="A85-Feruloyl-Esterase"/>
</dbReference>
<dbReference type="GeneID" id="31502259"/>
<dbReference type="KEGG" id="pru:PRU_2728"/>
<dbReference type="eggNOG" id="COG2382">
    <property type="taxonomic scope" value="Bacteria"/>
</dbReference>
<dbReference type="eggNOG" id="COG3693">
    <property type="taxonomic scope" value="Bacteria"/>
</dbReference>
<dbReference type="HOGENOM" id="CLU_385739_0_0_10"/>
<dbReference type="UniPathway" id="UPA00114"/>
<dbReference type="Proteomes" id="UP000000927">
    <property type="component" value="Chromosome"/>
</dbReference>
<dbReference type="GO" id="GO:0031176">
    <property type="term" value="F:endo-1,4-beta-xylanase activity"/>
    <property type="evidence" value="ECO:0007669"/>
    <property type="project" value="UniProtKB-EC"/>
</dbReference>
<dbReference type="GO" id="GO:0030600">
    <property type="term" value="F:feruloyl esterase activity"/>
    <property type="evidence" value="ECO:0007669"/>
    <property type="project" value="UniProtKB-EC"/>
</dbReference>
<dbReference type="GO" id="GO:0045493">
    <property type="term" value="P:xylan catabolic process"/>
    <property type="evidence" value="ECO:0007669"/>
    <property type="project" value="UniProtKB-UniPathway"/>
</dbReference>
<dbReference type="CDD" id="cd02858">
    <property type="entry name" value="E_set_Esterase_N"/>
    <property type="match status" value="1"/>
</dbReference>
<dbReference type="Gene3D" id="3.40.50.1820">
    <property type="entry name" value="alpha/beta hydrolase"/>
    <property type="match status" value="1"/>
</dbReference>
<dbReference type="Gene3D" id="3.20.20.80">
    <property type="entry name" value="Glycosidases"/>
    <property type="match status" value="1"/>
</dbReference>
<dbReference type="Gene3D" id="2.60.40.10">
    <property type="entry name" value="Immunoglobulins"/>
    <property type="match status" value="1"/>
</dbReference>
<dbReference type="InterPro" id="IPR029058">
    <property type="entry name" value="AB_hydrolase_fold"/>
</dbReference>
<dbReference type="InterPro" id="IPR000801">
    <property type="entry name" value="Esterase-like"/>
</dbReference>
<dbReference type="InterPro" id="IPR044846">
    <property type="entry name" value="GH10"/>
</dbReference>
<dbReference type="InterPro" id="IPR001000">
    <property type="entry name" value="GH10_dom"/>
</dbReference>
<dbReference type="InterPro" id="IPR017853">
    <property type="entry name" value="Glycoside_hydrolase_SF"/>
</dbReference>
<dbReference type="InterPro" id="IPR013783">
    <property type="entry name" value="Ig-like_fold"/>
</dbReference>
<dbReference type="InterPro" id="IPR014756">
    <property type="entry name" value="Ig_E-set"/>
</dbReference>
<dbReference type="InterPro" id="IPR049642">
    <property type="entry name" value="Xylase_Ferestase"/>
</dbReference>
<dbReference type="NCBIfam" id="NF041944">
    <property type="entry name" value="Xylase_Ferestase"/>
    <property type="match status" value="1"/>
</dbReference>
<dbReference type="PANTHER" id="PTHR31490:SF90">
    <property type="entry name" value="ENDO-1,4-BETA-XYLANASE A"/>
    <property type="match status" value="1"/>
</dbReference>
<dbReference type="PANTHER" id="PTHR31490">
    <property type="entry name" value="GLYCOSYL HYDROLASE"/>
    <property type="match status" value="1"/>
</dbReference>
<dbReference type="Pfam" id="PF00756">
    <property type="entry name" value="Esterase"/>
    <property type="match status" value="1"/>
</dbReference>
<dbReference type="Pfam" id="PF00331">
    <property type="entry name" value="Glyco_hydro_10"/>
    <property type="match status" value="1"/>
</dbReference>
<dbReference type="PRINTS" id="PR00134">
    <property type="entry name" value="GLHYDRLASE10"/>
</dbReference>
<dbReference type="SMART" id="SM00633">
    <property type="entry name" value="Glyco_10"/>
    <property type="match status" value="1"/>
</dbReference>
<dbReference type="SUPFAM" id="SSF51445">
    <property type="entry name" value="(Trans)glycosidases"/>
    <property type="match status" value="1"/>
</dbReference>
<dbReference type="SUPFAM" id="SSF53474">
    <property type="entry name" value="alpha/beta-Hydrolases"/>
    <property type="match status" value="1"/>
</dbReference>
<dbReference type="SUPFAM" id="SSF81296">
    <property type="entry name" value="E set domains"/>
    <property type="match status" value="1"/>
</dbReference>
<dbReference type="PROSITE" id="PS51760">
    <property type="entry name" value="GH10_2"/>
    <property type="match status" value="1"/>
</dbReference>
<sequence>MKKLLVALSLIAGSLTASAQWGRPVDYAAGPGLKDAYKDYFTVGVAVNKFNISDPAQTAIVKKQFNSVTAENAWKPGEIHPKEGVWNFGLADSIANFCRENGIKMRGHCLCWHSQFADWMFTDKKGKPVKKEVFYQRLREHIHTVVNRYKDVVYAWDVVNEAMADDGRPFEFVDGKMVPASPYRQSRHFKLCGDEFIAKAFEFAREADPTGVLMYNDYSCVDEGKRERIYNMVKKMKEAGVPIDGIGMQGHYNIYFPDEEKLEKAINRFSEIVNTIHITELDLRTNTESGGQLMFSRGEAKPQPGYMQTLQEDQYARLFKIFRKHKDVIKNVTFWNLSDKDSWLGVNNHPLPFDENFKAKRSLQIIRDFDAAMDNRKPKEDFVPNPMNQPGQEYPMVNSEGYARFRVEAPDAKSVIVSLGLGGRGGTVLRKDKNGVWTGTTEGPMDPGFHYYHLTIDGGVFNDPGTHNYFGSCRWESGIEIPAKDQDFYAYRKDINHGNIQQVTFWSESTGKMQTANVYLPYGYGKVVKGKQERYPVLYLQHGWGENETSWPVQGKAGLIMDNLIADGKIKPFIVVMAYGLTNDFKFGSIGKFTAEEFEKVLIDELIPTIDKNFLTKADKWNRAMAGLSMGGMETKLITLRRPEMFGYWGLLSGGTYMPEEIKDPKAVKYIFVGCGDKENPEGINKSVEALKAAGFKAEGLVSEGTAHEFLTWRRCLEKMAQSLFK</sequence>
<comment type="function">
    <text evidence="4 6">Involved in degradation of plant cell wall polysaccharides. Has endo-xylanase activity towards substrates such as oat spelt xylan (OSX), acetylated xylo-oligosaccharides and acetylated xylan, producing primarily xylobiose; cannot hydrolyze xylobiose to xylose. Also has feruloyl esterase activity, releasing ferulic acid from methylferulate, and from the more natural substrates wheat bran, corn fiber, and XOS(FA,Ac), a corn fiber-derived substrate enriched in O-acetyl and ferulic acid esters. Exhibits negligible acetyl esterase activity on sugar acetates. Acts synergistically with Xyl3A to increase the release of xylose from xylan. Does not possess endoglucanase or mannanase activities since it is not able to hydrolyze carboxymethyl cellulose and locust bean gum.</text>
</comment>
<comment type="catalytic activity">
    <reaction evidence="4 6">
        <text>Endohydrolysis of (1-&gt;4)-beta-D-xylosidic linkages in xylans.</text>
        <dbReference type="EC" id="3.2.1.8"/>
    </reaction>
</comment>
<comment type="catalytic activity">
    <reaction evidence="4 6">
        <text>feruloyl-polysaccharide + H2O = ferulate + polysaccharide.</text>
        <dbReference type="EC" id="3.1.1.73"/>
    </reaction>
</comment>
<comment type="biophysicochemical properties">
    <phDependence>
        <text evidence="4">Optimum pH is 6.0 for xylanase activity.</text>
    </phDependence>
</comment>
<comment type="pathway">
    <text evidence="4 6">Glycan degradation; xylan degradation.</text>
</comment>
<comment type="subunit">
    <text evidence="4">Monomer or homodimer.</text>
</comment>
<comment type="induction">
    <text evidence="6">By growth on ester-enriched corn oligosaccharides.</text>
</comment>
<comment type="domain">
    <text evidence="4">The two catalytic domains appear to be functionally coupled.</text>
</comment>
<comment type="similarity">
    <text evidence="2">In the N-terminal section; belongs to the glycosyl hydrolase 10 (cellulase F) family.</text>
</comment>